<accession>Q92738</accession>
<accession>A8KA79</accession>
<accession>Q15400</accession>
<accession>Q5VV10</accession>
<accession>Q7L0K9</accession>
<gene>
    <name type="primary">USP6NL</name>
    <name type="synonym">KIAA0019</name>
</gene>
<comment type="function">
    <text evidence="4 5 6">Acts as a GTPase-activating protein for RAB5A and RAB43. Involved in receptor trafficking. In complex with EPS8 inhibits internalization of EGFR. Involved in retrograde transport from the endocytic pathway to the Golgi apparatus. Involved in the transport of Shiga toxin from early and recycling endosomes to the trans-Golgi network. Required for structural integrity of the Golgi complex.</text>
</comment>
<comment type="subunit">
    <text evidence="7">Interacts with EPS8.</text>
</comment>
<comment type="subcellular location">
    <subcellularLocation>
        <location>Golgi apparatus</location>
    </subcellularLocation>
    <subcellularLocation>
        <location>Cytoplasmic vesicle</location>
    </subcellularLocation>
</comment>
<comment type="alternative products">
    <event type="alternative splicing"/>
    <isoform>
        <id>Q92738-1</id>
        <name>1</name>
        <sequence type="displayed"/>
    </isoform>
    <isoform>
        <id>Q92738-2</id>
        <name>2</name>
        <sequence type="described" ref="VSP_040850"/>
    </isoform>
</comment>
<comment type="tissue specificity">
    <text evidence="7">Widely expressed.</text>
</comment>
<comment type="sequence caution" evidence="9">
    <conflict type="erroneous initiation">
        <sequence resource="EMBL-CDS" id="BAA02807"/>
    </conflict>
    <text>Extended N-terminus.</text>
</comment>
<evidence type="ECO:0000250" key="1">
    <source>
        <dbReference type="UniProtKB" id="Q80XC3"/>
    </source>
</evidence>
<evidence type="ECO:0000255" key="2">
    <source>
        <dbReference type="PROSITE-ProRule" id="PRU00163"/>
    </source>
</evidence>
<evidence type="ECO:0000256" key="3">
    <source>
        <dbReference type="SAM" id="MobiDB-lite"/>
    </source>
</evidence>
<evidence type="ECO:0000269" key="4">
    <source>
    </source>
</evidence>
<evidence type="ECO:0000269" key="5">
    <source>
    </source>
</evidence>
<evidence type="ECO:0000269" key="6">
    <source>
    </source>
</evidence>
<evidence type="ECO:0000269" key="7">
    <source>
    </source>
</evidence>
<evidence type="ECO:0000303" key="8">
    <source>
    </source>
</evidence>
<evidence type="ECO:0000305" key="9"/>
<evidence type="ECO:0007744" key="10">
    <source>
    </source>
</evidence>
<evidence type="ECO:0007744" key="11">
    <source>
    </source>
</evidence>
<evidence type="ECO:0007744" key="12">
    <source>
    </source>
</evidence>
<evidence type="ECO:0007744" key="13">
    <source>
    </source>
</evidence>
<evidence type="ECO:0007744" key="14">
    <source>
    </source>
</evidence>
<evidence type="ECO:0007744" key="15">
    <source>
    </source>
</evidence>
<evidence type="ECO:0007744" key="16">
    <source>
    </source>
</evidence>
<evidence type="ECO:0007744" key="17">
    <source>
    </source>
</evidence>
<feature type="chain" id="PRO_0000208056" description="USP6 N-terminal-like protein">
    <location>
        <begin position="1"/>
        <end position="828"/>
    </location>
</feature>
<feature type="domain" description="Rab-GAP TBC" evidence="2">
    <location>
        <begin position="100"/>
        <end position="292"/>
    </location>
</feature>
<feature type="region of interest" description="Disordered" evidence="3">
    <location>
        <begin position="355"/>
        <end position="722"/>
    </location>
</feature>
<feature type="region of interest" description="Disordered" evidence="3">
    <location>
        <begin position="789"/>
        <end position="817"/>
    </location>
</feature>
<feature type="compositionally biased region" description="Basic and acidic residues" evidence="3">
    <location>
        <begin position="355"/>
        <end position="367"/>
    </location>
</feature>
<feature type="compositionally biased region" description="Basic and acidic residues" evidence="3">
    <location>
        <begin position="434"/>
        <end position="451"/>
    </location>
</feature>
<feature type="compositionally biased region" description="Low complexity" evidence="3">
    <location>
        <begin position="465"/>
        <end position="478"/>
    </location>
</feature>
<feature type="compositionally biased region" description="Basic and acidic residues" evidence="3">
    <location>
        <begin position="498"/>
        <end position="508"/>
    </location>
</feature>
<feature type="compositionally biased region" description="Basic and acidic residues" evidence="3">
    <location>
        <begin position="535"/>
        <end position="544"/>
    </location>
</feature>
<feature type="compositionally biased region" description="Polar residues" evidence="3">
    <location>
        <begin position="592"/>
        <end position="603"/>
    </location>
</feature>
<feature type="compositionally biased region" description="Polar residues" evidence="3">
    <location>
        <begin position="648"/>
        <end position="666"/>
    </location>
</feature>
<feature type="compositionally biased region" description="Polar residues" evidence="3">
    <location>
        <begin position="673"/>
        <end position="683"/>
    </location>
</feature>
<feature type="compositionally biased region" description="Low complexity" evidence="3">
    <location>
        <begin position="686"/>
        <end position="697"/>
    </location>
</feature>
<feature type="modified residue" description="N-acetylmethionine" evidence="15">
    <location>
        <position position="1"/>
    </location>
</feature>
<feature type="modified residue" description="Phosphoserine" evidence="11 16">
    <location>
        <position position="391"/>
    </location>
</feature>
<feature type="modified residue" description="Phosphoserine" evidence="11 16">
    <location>
        <position position="396"/>
    </location>
</feature>
<feature type="modified residue" description="Phosphoserine" evidence="16">
    <location>
        <position position="400"/>
    </location>
</feature>
<feature type="modified residue" description="Phosphoserine" evidence="1">
    <location>
        <position position="546"/>
    </location>
</feature>
<feature type="modified residue" description="Phosphoserine" evidence="1">
    <location>
        <position position="549"/>
    </location>
</feature>
<feature type="modified residue" description="Phosphotyrosine" evidence="10">
    <location>
        <position position="582"/>
    </location>
</feature>
<feature type="modified residue" description="Phosphoserine" evidence="10 16">
    <location>
        <position position="585"/>
    </location>
</feature>
<feature type="modified residue" description="Phosphoserine" evidence="13 17">
    <location>
        <position position="642"/>
    </location>
</feature>
<feature type="modified residue" description="Phosphoserine" evidence="13">
    <location>
        <position position="655"/>
    </location>
</feature>
<feature type="modified residue" description="Phosphoserine" evidence="13">
    <location>
        <position position="659"/>
    </location>
</feature>
<feature type="modified residue" description="Phosphoserine" evidence="1">
    <location>
        <position position="676"/>
    </location>
</feature>
<feature type="modified residue" description="Phosphoserine" evidence="13 16">
    <location>
        <position position="680"/>
    </location>
</feature>
<feature type="modified residue" description="Phosphoserine" evidence="11 12 13 14 16 17">
    <location>
        <position position="716"/>
    </location>
</feature>
<feature type="modified residue" description="Phosphotyrosine" evidence="10">
    <location>
        <position position="729"/>
    </location>
</feature>
<feature type="splice variant" id="VSP_040850" description="In isoform 2." evidence="8">
    <original>MN</original>
    <variation>MRTEAVVNSQGQTDYLTKD</variation>
    <location>
        <begin position="1"/>
        <end position="2"/>
    </location>
</feature>
<feature type="mutagenesis site" description="Loss of GAP activity on RAB5A." evidence="4">
    <original>R</original>
    <variation>A</variation>
    <location>
        <position position="106"/>
    </location>
</feature>
<feature type="mutagenesis site" description="Loss of GAP activity on RAB5A." evidence="4">
    <original>D</original>
    <variation>A</variation>
    <location>
        <position position="147"/>
    </location>
</feature>
<feature type="mutagenesis site" description="Loss of GAP activity on RAB5A." evidence="4 5">
    <original>R</original>
    <variation>A</variation>
    <location>
        <position position="150"/>
    </location>
</feature>
<feature type="sequence conflict" description="In Ref. 4; BAF85633." evidence="9" ref="4">
    <original>E</original>
    <variation>D</variation>
    <location>
        <position position="622"/>
    </location>
</feature>
<dbReference type="EMBL" id="AB449916">
    <property type="protein sequence ID" value="BAH16659.1"/>
    <property type="molecule type" value="mRNA"/>
</dbReference>
<dbReference type="EMBL" id="D13644">
    <property type="protein sequence ID" value="BAA02807.2"/>
    <property type="status" value="ALT_INIT"/>
    <property type="molecule type" value="mRNA"/>
</dbReference>
<dbReference type="EMBL" id="AK292944">
    <property type="protein sequence ID" value="BAF85633.1"/>
    <property type="molecule type" value="mRNA"/>
</dbReference>
<dbReference type="EMBL" id="AL512631">
    <property type="status" value="NOT_ANNOTATED_CDS"/>
    <property type="molecule type" value="Genomic_DNA"/>
</dbReference>
<dbReference type="EMBL" id="AL590416">
    <property type="status" value="NOT_ANNOTATED_CDS"/>
    <property type="molecule type" value="Genomic_DNA"/>
</dbReference>
<dbReference type="EMBL" id="CH471072">
    <property type="protein sequence ID" value="EAW86344.1"/>
    <property type="molecule type" value="Genomic_DNA"/>
</dbReference>
<dbReference type="EMBL" id="BC042943">
    <property type="protein sequence ID" value="AAH42943.1"/>
    <property type="molecule type" value="mRNA"/>
</dbReference>
<dbReference type="EMBL" id="CF121539">
    <property type="status" value="NOT_ANNOTATED_CDS"/>
    <property type="molecule type" value="mRNA"/>
</dbReference>
<dbReference type="CCDS" id="CCDS44357.1">
    <molecule id="Q92738-2"/>
</dbReference>
<dbReference type="CCDS" id="CCDS53492.1">
    <molecule id="Q92738-1"/>
</dbReference>
<dbReference type="RefSeq" id="NP_001073960.1">
    <molecule id="Q92738-2"/>
    <property type="nucleotide sequence ID" value="NM_001080491.5"/>
</dbReference>
<dbReference type="RefSeq" id="NP_055503.1">
    <molecule id="Q92738-1"/>
    <property type="nucleotide sequence ID" value="NM_014688.5"/>
</dbReference>
<dbReference type="RefSeq" id="XP_047281993.1">
    <molecule id="Q92738-1"/>
    <property type="nucleotide sequence ID" value="XM_047426037.1"/>
</dbReference>
<dbReference type="RefSeq" id="XP_054223211.1">
    <molecule id="Q92738-1"/>
    <property type="nucleotide sequence ID" value="XM_054367236.1"/>
</dbReference>
<dbReference type="SMR" id="Q92738"/>
<dbReference type="BioGRID" id="115063">
    <property type="interactions" value="116"/>
</dbReference>
<dbReference type="ELM" id="Q92738"/>
<dbReference type="FunCoup" id="Q92738">
    <property type="interactions" value="3186"/>
</dbReference>
<dbReference type="IntAct" id="Q92738">
    <property type="interactions" value="55"/>
</dbReference>
<dbReference type="MINT" id="Q92738"/>
<dbReference type="STRING" id="9606.ENSP00000277575"/>
<dbReference type="iPTMnet" id="Q92738"/>
<dbReference type="PhosphoSitePlus" id="Q92738"/>
<dbReference type="BioMuta" id="USP6NL"/>
<dbReference type="DMDM" id="50897492"/>
<dbReference type="jPOST" id="Q92738"/>
<dbReference type="MassIVE" id="Q92738"/>
<dbReference type="PaxDb" id="9606-ENSP00000277575"/>
<dbReference type="PeptideAtlas" id="Q92738"/>
<dbReference type="ProteomicsDB" id="75435">
    <molecule id="Q92738-1"/>
</dbReference>
<dbReference type="ProteomicsDB" id="75436">
    <molecule id="Q92738-2"/>
</dbReference>
<dbReference type="Pumba" id="Q92738"/>
<dbReference type="Antibodypedia" id="52457">
    <property type="antibodies" value="106 antibodies from 20 providers"/>
</dbReference>
<dbReference type="DNASU" id="9712"/>
<dbReference type="Ensembl" id="ENST00000277575.5">
    <molecule id="Q92738-2"/>
    <property type="protein sequence ID" value="ENSP00000277575.5"/>
    <property type="gene ID" value="ENSG00000148429.15"/>
</dbReference>
<dbReference type="Ensembl" id="ENST00000609104.6">
    <molecule id="Q92738-1"/>
    <property type="protein sequence ID" value="ENSP00000476462.1"/>
    <property type="gene ID" value="ENSG00000148429.15"/>
</dbReference>
<dbReference type="GeneID" id="9712"/>
<dbReference type="KEGG" id="hsa:9712"/>
<dbReference type="MANE-Select" id="ENST00000609104.6">
    <property type="protein sequence ID" value="ENSP00000476462.1"/>
    <property type="RefSeq nucleotide sequence ID" value="NM_014688.5"/>
    <property type="RefSeq protein sequence ID" value="NP_055503.1"/>
</dbReference>
<dbReference type="UCSC" id="uc001iks.1">
    <molecule id="Q92738-1"/>
    <property type="organism name" value="human"/>
</dbReference>
<dbReference type="AGR" id="HGNC:16858"/>
<dbReference type="CTD" id="9712"/>
<dbReference type="DisGeNET" id="9712"/>
<dbReference type="GeneCards" id="USP6NL"/>
<dbReference type="HGNC" id="HGNC:16858">
    <property type="gene designation" value="USP6NL"/>
</dbReference>
<dbReference type="HPA" id="ENSG00000148429">
    <property type="expression patterns" value="Low tissue specificity"/>
</dbReference>
<dbReference type="MIM" id="605405">
    <property type="type" value="gene"/>
</dbReference>
<dbReference type="neXtProt" id="NX_Q92738"/>
<dbReference type="NIAGADS" id="ENSG00000148429"/>
<dbReference type="OpenTargets" id="ENSG00000148429"/>
<dbReference type="PharmGKB" id="PA134955568"/>
<dbReference type="VEuPathDB" id="HostDB:ENSG00000148429"/>
<dbReference type="eggNOG" id="KOG1102">
    <property type="taxonomic scope" value="Eukaryota"/>
</dbReference>
<dbReference type="GeneTree" id="ENSGT00940000156715"/>
<dbReference type="HOGENOM" id="CLU_005350_10_3_1"/>
<dbReference type="InParanoid" id="Q92738"/>
<dbReference type="OMA" id="EFVPRWN"/>
<dbReference type="OrthoDB" id="9572838at2759"/>
<dbReference type="PAN-GO" id="Q92738">
    <property type="GO annotations" value="3 GO annotations based on evolutionary models"/>
</dbReference>
<dbReference type="PhylomeDB" id="Q92738"/>
<dbReference type="TreeFam" id="TF318099"/>
<dbReference type="PathwayCommons" id="Q92738"/>
<dbReference type="Reactome" id="R-HSA-6811440">
    <property type="pathway name" value="Retrograde transport at the Trans-Golgi-Network"/>
</dbReference>
<dbReference type="SignaLink" id="Q92738"/>
<dbReference type="BioGRID-ORCS" id="9712">
    <property type="hits" value="12 hits in 1158 CRISPR screens"/>
</dbReference>
<dbReference type="ChiTaRS" id="USP6NL">
    <property type="organism name" value="human"/>
</dbReference>
<dbReference type="GeneWiki" id="USP6NL"/>
<dbReference type="GenomeRNAi" id="9712"/>
<dbReference type="Pharos" id="Q92738">
    <property type="development level" value="Tbio"/>
</dbReference>
<dbReference type="PRO" id="PR:Q92738"/>
<dbReference type="Proteomes" id="UP000005640">
    <property type="component" value="Chromosome 10"/>
</dbReference>
<dbReference type="RNAct" id="Q92738">
    <property type="molecule type" value="protein"/>
</dbReference>
<dbReference type="Bgee" id="ENSG00000148429">
    <property type="expression patterns" value="Expressed in amniotic fluid and 191 other cell types or tissues"/>
</dbReference>
<dbReference type="ExpressionAtlas" id="Q92738">
    <property type="expression patterns" value="baseline and differential"/>
</dbReference>
<dbReference type="GO" id="GO:0031410">
    <property type="term" value="C:cytoplasmic vesicle"/>
    <property type="evidence" value="ECO:0000314"/>
    <property type="project" value="UniProtKB"/>
</dbReference>
<dbReference type="GO" id="GO:0005829">
    <property type="term" value="C:cytosol"/>
    <property type="evidence" value="ECO:0000304"/>
    <property type="project" value="Reactome"/>
</dbReference>
<dbReference type="GO" id="GO:0005886">
    <property type="term" value="C:plasma membrane"/>
    <property type="evidence" value="ECO:0000314"/>
    <property type="project" value="UniProtKB"/>
</dbReference>
<dbReference type="GO" id="GO:0032588">
    <property type="term" value="C:trans-Golgi network membrane"/>
    <property type="evidence" value="ECO:0000304"/>
    <property type="project" value="Reactome"/>
</dbReference>
<dbReference type="GO" id="GO:0005096">
    <property type="term" value="F:GTPase activator activity"/>
    <property type="evidence" value="ECO:0000314"/>
    <property type="project" value="UniProtKB"/>
</dbReference>
<dbReference type="GO" id="GO:0031267">
    <property type="term" value="F:small GTPase binding"/>
    <property type="evidence" value="ECO:0000353"/>
    <property type="project" value="UniProtKB"/>
</dbReference>
<dbReference type="GO" id="GO:0007030">
    <property type="term" value="P:Golgi organization"/>
    <property type="evidence" value="ECO:0000315"/>
    <property type="project" value="UniProtKB"/>
</dbReference>
<dbReference type="GO" id="GO:0048227">
    <property type="term" value="P:plasma membrane to endosome transport"/>
    <property type="evidence" value="ECO:0000315"/>
    <property type="project" value="UniProtKB"/>
</dbReference>
<dbReference type="GO" id="GO:0043547">
    <property type="term" value="P:positive regulation of GTPase activity"/>
    <property type="evidence" value="ECO:0000314"/>
    <property type="project" value="UniProtKB"/>
</dbReference>
<dbReference type="GO" id="GO:1903358">
    <property type="term" value="P:regulation of Golgi organization"/>
    <property type="evidence" value="ECO:0000315"/>
    <property type="project" value="UniProtKB"/>
</dbReference>
<dbReference type="GO" id="GO:0035526">
    <property type="term" value="P:retrograde transport, plasma membrane to Golgi"/>
    <property type="evidence" value="ECO:0000315"/>
    <property type="project" value="UniProtKB"/>
</dbReference>
<dbReference type="GO" id="GO:0019068">
    <property type="term" value="P:virion assembly"/>
    <property type="evidence" value="ECO:0000315"/>
    <property type="project" value="UniProtKB"/>
</dbReference>
<dbReference type="FunFam" id="1.10.8.270:FF:000010">
    <property type="entry name" value="Putative USP6 N-terminal-like protein"/>
    <property type="match status" value="1"/>
</dbReference>
<dbReference type="FunFam" id="1.10.10.750:FF:000001">
    <property type="entry name" value="TBC1 domain family member 10A"/>
    <property type="match status" value="1"/>
</dbReference>
<dbReference type="FunFam" id="1.10.472.80:FF:000019">
    <property type="entry name" value="USP6 N-terminal like"/>
    <property type="match status" value="1"/>
</dbReference>
<dbReference type="Gene3D" id="1.10.8.270">
    <property type="entry name" value="putative rabgap domain of human tbc1 domain family member 14 like domains"/>
    <property type="match status" value="1"/>
</dbReference>
<dbReference type="Gene3D" id="1.10.10.750">
    <property type="entry name" value="Ypt/Rab-GAP domain of gyp1p, domain 1"/>
    <property type="match status" value="1"/>
</dbReference>
<dbReference type="Gene3D" id="1.10.472.80">
    <property type="entry name" value="Ypt/Rab-GAP domain of gyp1p, domain 3"/>
    <property type="match status" value="1"/>
</dbReference>
<dbReference type="InterPro" id="IPR000195">
    <property type="entry name" value="Rab-GAP-TBC_dom"/>
</dbReference>
<dbReference type="InterPro" id="IPR035969">
    <property type="entry name" value="Rab-GAP_TBC_sf"/>
</dbReference>
<dbReference type="InterPro" id="IPR050302">
    <property type="entry name" value="Rab_GAP_TBC_domain"/>
</dbReference>
<dbReference type="PANTHER" id="PTHR47219">
    <property type="entry name" value="RAB GTPASE-ACTIVATING PROTEIN 1-LIKE"/>
    <property type="match status" value="1"/>
</dbReference>
<dbReference type="PANTHER" id="PTHR47219:SF19">
    <property type="entry name" value="USP6 N-TERMINAL-LIKE PROTEIN ISOFORM X1"/>
    <property type="match status" value="1"/>
</dbReference>
<dbReference type="Pfam" id="PF00566">
    <property type="entry name" value="RabGAP-TBC"/>
    <property type="match status" value="1"/>
</dbReference>
<dbReference type="SMART" id="SM00164">
    <property type="entry name" value="TBC"/>
    <property type="match status" value="1"/>
</dbReference>
<dbReference type="SUPFAM" id="SSF47923">
    <property type="entry name" value="Ypt/Rab-GAP domain of gyp1p"/>
    <property type="match status" value="2"/>
</dbReference>
<dbReference type="PROSITE" id="PS50086">
    <property type="entry name" value="TBC_RABGAP"/>
    <property type="match status" value="1"/>
</dbReference>
<sequence>MNSDQDVALKLAQERAEIVAKYDRGREGAEIEPWEDADYLVYKVTDRFGFLHEEELPDHNVAVERQKHLEIERTTKWLKMLKGWEKYKNTEKFHRRIYKGIPLQLRGEVWALLLEIPKMKEETRDLYSKLKHRARGCSPDIRQIDLDVNRTFRDHIMFRDRYGVKQQSLFHVLAAYSIYNTEVGYCQGMSQITALLLMYMNEEDAFWALVKLFSGPKHAMHGFFVQGFPKLLRFQEHHEKILNKFLSKLKQHLDSQEIYTSFYTMKWFFQCFLDRTPFTLNLRIWDIYIFEGERVLTAMSYTILKLHKKHLMKLSMEELVEFFQETLAKDFFFEDDFVIEQLQISMTELKRAKLDLPEPGKEDEYPKKPLGQLPPELQSWGVHHLSNGQRSVGRPSPLASGRRESGAPHRRHEHSPHPQSRTGTPERAQPPRRKSVEEESKKLKDEADFQRKLPSGPQDSSRQYNHAAANQNSNATSNIRKEFVPKWNKPSDVSATERTAKYTMEGKGRAAHPALAVTVPGPAEVRVSNVRPKMKALDAEDGKRGSTASQYDNVPGPELDSGASVEEALERAYSQSPRHALYPPSPRKHAEPSSSPSKVSNKFTFKVQPPSHARYPSQLDGEARGLAHPPSYSNPPVYHGNSPKHFPTANSSFASPQFSPGTQLNPSRRPHGSTLSVSASPEKSYSRPSPLVLPSSRIEVLPVDTGAGGYSGNSGSPKNGKLIIPPVDYLPDNRTWSEVSYTYRPETQGQSWTRDASRGNLPKYSAFQLAPFQDHGLPAVSVDSPVRYKASPAAEDASPSGYPYSGPPPPAYHYRNRDGLSIQESVLL</sequence>
<protein>
    <recommendedName>
        <fullName>USP6 N-terminal-like protein</fullName>
    </recommendedName>
    <alternativeName>
        <fullName>Related to the N-terminus of tre</fullName>
        <shortName>RN-tre</shortName>
    </alternativeName>
</protein>
<proteinExistence type="evidence at protein level"/>
<reference key="1">
    <citation type="journal article" date="1996" name="Oncogene">
        <title>RN-tre identifies a family of tre-related proteins displaying a novel potential protein binding domain.</title>
        <authorList>
            <person name="Wong W.T."/>
            <person name="Seki N."/>
            <person name="Nagase T."/>
            <person name="Nomura N."/>
            <person name="Robbins K.C."/>
            <person name="Di Fiore P.P."/>
            <person name="Matoskova B."/>
        </authorList>
    </citation>
    <scope>NUCLEOTIDE SEQUENCE [MRNA] (ISOFORM 1)</scope>
    <scope>TISSUE SPECIFICITY</scope>
    <scope>INTERACTION WITH EPS8</scope>
</reference>
<reference key="2">
    <citation type="journal article" date="2009" name="Genes Cells">
        <title>Identification and characterization of a novel Tre-2/Bub2/Cdc16 (TBC) protein that possesses Rab3A-GAP activity.</title>
        <authorList>
            <person name="Ishibashi K."/>
            <person name="Kanno E."/>
            <person name="Itoh T."/>
            <person name="Fukuda M."/>
        </authorList>
    </citation>
    <scope>NUCLEOTIDE SEQUENCE [MRNA] (ISOFORM 1)</scope>
    <source>
        <tissue>Brain</tissue>
    </source>
</reference>
<reference key="3">
    <citation type="journal article" date="1994" name="DNA Res.">
        <title>Prediction of the coding sequences of unidentified human genes. I. The coding sequences of 40 new genes (KIAA0001-KIAA0040) deduced by analysis of randomly sampled cDNA clones from human immature myeloid cell line KG-1.</title>
        <authorList>
            <person name="Nomura N."/>
            <person name="Miyajima N."/>
            <person name="Sazuka T."/>
            <person name="Tanaka A."/>
            <person name="Kawarabayasi Y."/>
            <person name="Sato S."/>
            <person name="Nagase T."/>
            <person name="Seki N."/>
            <person name="Ishikawa K."/>
            <person name="Tabata S."/>
        </authorList>
    </citation>
    <scope>NUCLEOTIDE SEQUENCE [LARGE SCALE MRNA] (ISOFORM 1)</scope>
    <source>
        <tissue>Bone marrow</tissue>
    </source>
</reference>
<reference key="4">
    <citation type="journal article" date="2004" name="Nat. Genet.">
        <title>Complete sequencing and characterization of 21,243 full-length human cDNAs.</title>
        <authorList>
            <person name="Ota T."/>
            <person name="Suzuki Y."/>
            <person name="Nishikawa T."/>
            <person name="Otsuki T."/>
            <person name="Sugiyama T."/>
            <person name="Irie R."/>
            <person name="Wakamatsu A."/>
            <person name="Hayashi K."/>
            <person name="Sato H."/>
            <person name="Nagai K."/>
            <person name="Kimura K."/>
            <person name="Makita H."/>
            <person name="Sekine M."/>
            <person name="Obayashi M."/>
            <person name="Nishi T."/>
            <person name="Shibahara T."/>
            <person name="Tanaka T."/>
            <person name="Ishii S."/>
            <person name="Yamamoto J."/>
            <person name="Saito K."/>
            <person name="Kawai Y."/>
            <person name="Isono Y."/>
            <person name="Nakamura Y."/>
            <person name="Nagahari K."/>
            <person name="Murakami K."/>
            <person name="Yasuda T."/>
            <person name="Iwayanagi T."/>
            <person name="Wagatsuma M."/>
            <person name="Shiratori A."/>
            <person name="Sudo H."/>
            <person name="Hosoiri T."/>
            <person name="Kaku Y."/>
            <person name="Kodaira H."/>
            <person name="Kondo H."/>
            <person name="Sugawara M."/>
            <person name="Takahashi M."/>
            <person name="Kanda K."/>
            <person name="Yokoi T."/>
            <person name="Furuya T."/>
            <person name="Kikkawa E."/>
            <person name="Omura Y."/>
            <person name="Abe K."/>
            <person name="Kamihara K."/>
            <person name="Katsuta N."/>
            <person name="Sato K."/>
            <person name="Tanikawa M."/>
            <person name="Yamazaki M."/>
            <person name="Ninomiya K."/>
            <person name="Ishibashi T."/>
            <person name="Yamashita H."/>
            <person name="Murakawa K."/>
            <person name="Fujimori K."/>
            <person name="Tanai H."/>
            <person name="Kimata M."/>
            <person name="Watanabe M."/>
            <person name="Hiraoka S."/>
            <person name="Chiba Y."/>
            <person name="Ishida S."/>
            <person name="Ono Y."/>
            <person name="Takiguchi S."/>
            <person name="Watanabe S."/>
            <person name="Yosida M."/>
            <person name="Hotuta T."/>
            <person name="Kusano J."/>
            <person name="Kanehori K."/>
            <person name="Takahashi-Fujii A."/>
            <person name="Hara H."/>
            <person name="Tanase T.-O."/>
            <person name="Nomura Y."/>
            <person name="Togiya S."/>
            <person name="Komai F."/>
            <person name="Hara R."/>
            <person name="Takeuchi K."/>
            <person name="Arita M."/>
            <person name="Imose N."/>
            <person name="Musashino K."/>
            <person name="Yuuki H."/>
            <person name="Oshima A."/>
            <person name="Sasaki N."/>
            <person name="Aotsuka S."/>
            <person name="Yoshikawa Y."/>
            <person name="Matsunawa H."/>
            <person name="Ichihara T."/>
            <person name="Shiohata N."/>
            <person name="Sano S."/>
            <person name="Moriya S."/>
            <person name="Momiyama H."/>
            <person name="Satoh N."/>
            <person name="Takami S."/>
            <person name="Terashima Y."/>
            <person name="Suzuki O."/>
            <person name="Nakagawa S."/>
            <person name="Senoh A."/>
            <person name="Mizoguchi H."/>
            <person name="Goto Y."/>
            <person name="Shimizu F."/>
            <person name="Wakebe H."/>
            <person name="Hishigaki H."/>
            <person name="Watanabe T."/>
            <person name="Sugiyama A."/>
            <person name="Takemoto M."/>
            <person name="Kawakami B."/>
            <person name="Yamazaki M."/>
            <person name="Watanabe K."/>
            <person name="Kumagai A."/>
            <person name="Itakura S."/>
            <person name="Fukuzumi Y."/>
            <person name="Fujimori Y."/>
            <person name="Komiyama M."/>
            <person name="Tashiro H."/>
            <person name="Tanigami A."/>
            <person name="Fujiwara T."/>
            <person name="Ono T."/>
            <person name="Yamada K."/>
            <person name="Fujii Y."/>
            <person name="Ozaki K."/>
            <person name="Hirao M."/>
            <person name="Ohmori Y."/>
            <person name="Kawabata A."/>
            <person name="Hikiji T."/>
            <person name="Kobatake N."/>
            <person name="Inagaki H."/>
            <person name="Ikema Y."/>
            <person name="Okamoto S."/>
            <person name="Okitani R."/>
            <person name="Kawakami T."/>
            <person name="Noguchi S."/>
            <person name="Itoh T."/>
            <person name="Shigeta K."/>
            <person name="Senba T."/>
            <person name="Matsumura K."/>
            <person name="Nakajima Y."/>
            <person name="Mizuno T."/>
            <person name="Morinaga M."/>
            <person name="Sasaki M."/>
            <person name="Togashi T."/>
            <person name="Oyama M."/>
            <person name="Hata H."/>
            <person name="Watanabe M."/>
            <person name="Komatsu T."/>
            <person name="Mizushima-Sugano J."/>
            <person name="Satoh T."/>
            <person name="Shirai Y."/>
            <person name="Takahashi Y."/>
            <person name="Nakagawa K."/>
            <person name="Okumura K."/>
            <person name="Nagase T."/>
            <person name="Nomura N."/>
            <person name="Kikuchi H."/>
            <person name="Masuho Y."/>
            <person name="Yamashita R."/>
            <person name="Nakai K."/>
            <person name="Yada T."/>
            <person name="Nakamura Y."/>
            <person name="Ohara O."/>
            <person name="Isogai T."/>
            <person name="Sugano S."/>
        </authorList>
    </citation>
    <scope>NUCLEOTIDE SEQUENCE [LARGE SCALE MRNA] (ISOFORM 1)</scope>
    <source>
        <tissue>Trachea</tissue>
    </source>
</reference>
<reference key="5">
    <citation type="journal article" date="2004" name="Nature">
        <title>The DNA sequence and comparative analysis of human chromosome 10.</title>
        <authorList>
            <person name="Deloukas P."/>
            <person name="Earthrowl M.E."/>
            <person name="Grafham D.V."/>
            <person name="Rubenfield M."/>
            <person name="French L."/>
            <person name="Steward C.A."/>
            <person name="Sims S.K."/>
            <person name="Jones M.C."/>
            <person name="Searle S."/>
            <person name="Scott C."/>
            <person name="Howe K."/>
            <person name="Hunt S.E."/>
            <person name="Andrews T.D."/>
            <person name="Gilbert J.G.R."/>
            <person name="Swarbreck D."/>
            <person name="Ashurst J.L."/>
            <person name="Taylor A."/>
            <person name="Battles J."/>
            <person name="Bird C.P."/>
            <person name="Ainscough R."/>
            <person name="Almeida J.P."/>
            <person name="Ashwell R.I.S."/>
            <person name="Ambrose K.D."/>
            <person name="Babbage A.K."/>
            <person name="Bagguley C.L."/>
            <person name="Bailey J."/>
            <person name="Banerjee R."/>
            <person name="Bates K."/>
            <person name="Beasley H."/>
            <person name="Bray-Allen S."/>
            <person name="Brown A.J."/>
            <person name="Brown J.Y."/>
            <person name="Burford D.C."/>
            <person name="Burrill W."/>
            <person name="Burton J."/>
            <person name="Cahill P."/>
            <person name="Camire D."/>
            <person name="Carter N.P."/>
            <person name="Chapman J.C."/>
            <person name="Clark S.Y."/>
            <person name="Clarke G."/>
            <person name="Clee C.M."/>
            <person name="Clegg S."/>
            <person name="Corby N."/>
            <person name="Coulson A."/>
            <person name="Dhami P."/>
            <person name="Dutta I."/>
            <person name="Dunn M."/>
            <person name="Faulkner L."/>
            <person name="Frankish A."/>
            <person name="Frankland J.A."/>
            <person name="Garner P."/>
            <person name="Garnett J."/>
            <person name="Gribble S."/>
            <person name="Griffiths C."/>
            <person name="Grocock R."/>
            <person name="Gustafson E."/>
            <person name="Hammond S."/>
            <person name="Harley J.L."/>
            <person name="Hart E."/>
            <person name="Heath P.D."/>
            <person name="Ho T.P."/>
            <person name="Hopkins B."/>
            <person name="Horne J."/>
            <person name="Howden P.J."/>
            <person name="Huckle E."/>
            <person name="Hynds C."/>
            <person name="Johnson C."/>
            <person name="Johnson D."/>
            <person name="Kana A."/>
            <person name="Kay M."/>
            <person name="Kimberley A.M."/>
            <person name="Kershaw J.K."/>
            <person name="Kokkinaki M."/>
            <person name="Laird G.K."/>
            <person name="Lawlor S."/>
            <person name="Lee H.M."/>
            <person name="Leongamornlert D.A."/>
            <person name="Laird G."/>
            <person name="Lloyd C."/>
            <person name="Lloyd D.M."/>
            <person name="Loveland J."/>
            <person name="Lovell J."/>
            <person name="McLaren S."/>
            <person name="McLay K.E."/>
            <person name="McMurray A."/>
            <person name="Mashreghi-Mohammadi M."/>
            <person name="Matthews L."/>
            <person name="Milne S."/>
            <person name="Nickerson T."/>
            <person name="Nguyen M."/>
            <person name="Overton-Larty E."/>
            <person name="Palmer S.A."/>
            <person name="Pearce A.V."/>
            <person name="Peck A.I."/>
            <person name="Pelan S."/>
            <person name="Phillimore B."/>
            <person name="Porter K."/>
            <person name="Rice C.M."/>
            <person name="Rogosin A."/>
            <person name="Ross M.T."/>
            <person name="Sarafidou T."/>
            <person name="Sehra H.K."/>
            <person name="Shownkeen R."/>
            <person name="Skuce C.D."/>
            <person name="Smith M."/>
            <person name="Standring L."/>
            <person name="Sycamore N."/>
            <person name="Tester J."/>
            <person name="Thorpe A."/>
            <person name="Torcasso W."/>
            <person name="Tracey A."/>
            <person name="Tromans A."/>
            <person name="Tsolas J."/>
            <person name="Wall M."/>
            <person name="Walsh J."/>
            <person name="Wang H."/>
            <person name="Weinstock K."/>
            <person name="West A.P."/>
            <person name="Willey D.L."/>
            <person name="Whitehead S.L."/>
            <person name="Wilming L."/>
            <person name="Wray P.W."/>
            <person name="Young L."/>
            <person name="Chen Y."/>
            <person name="Lovering R.C."/>
            <person name="Moschonas N.K."/>
            <person name="Siebert R."/>
            <person name="Fechtel K."/>
            <person name="Bentley D."/>
            <person name="Durbin R.M."/>
            <person name="Hubbard T."/>
            <person name="Doucette-Stamm L."/>
            <person name="Beck S."/>
            <person name="Smith D.R."/>
            <person name="Rogers J."/>
        </authorList>
    </citation>
    <scope>NUCLEOTIDE SEQUENCE [LARGE SCALE GENOMIC DNA]</scope>
</reference>
<reference key="6">
    <citation type="submission" date="2005-09" db="EMBL/GenBank/DDBJ databases">
        <authorList>
            <person name="Mural R.J."/>
            <person name="Istrail S."/>
            <person name="Sutton G.G."/>
            <person name="Florea L."/>
            <person name="Halpern A.L."/>
            <person name="Mobarry C.M."/>
            <person name="Lippert R."/>
            <person name="Walenz B."/>
            <person name="Shatkay H."/>
            <person name="Dew I."/>
            <person name="Miller J.R."/>
            <person name="Flanigan M.J."/>
            <person name="Edwards N.J."/>
            <person name="Bolanos R."/>
            <person name="Fasulo D."/>
            <person name="Halldorsson B.V."/>
            <person name="Hannenhalli S."/>
            <person name="Turner R."/>
            <person name="Yooseph S."/>
            <person name="Lu F."/>
            <person name="Nusskern D.R."/>
            <person name="Shue B.C."/>
            <person name="Zheng X.H."/>
            <person name="Zhong F."/>
            <person name="Delcher A.L."/>
            <person name="Huson D.H."/>
            <person name="Kravitz S.A."/>
            <person name="Mouchard L."/>
            <person name="Reinert K."/>
            <person name="Remington K.A."/>
            <person name="Clark A.G."/>
            <person name="Waterman M.S."/>
            <person name="Eichler E.E."/>
            <person name="Adams M.D."/>
            <person name="Hunkapiller M.W."/>
            <person name="Myers E.W."/>
            <person name="Venter J.C."/>
        </authorList>
    </citation>
    <scope>NUCLEOTIDE SEQUENCE [LARGE SCALE GENOMIC DNA]</scope>
</reference>
<reference key="7">
    <citation type="journal article" date="2004" name="Genome Res.">
        <title>The status, quality, and expansion of the NIH full-length cDNA project: the Mammalian Gene Collection (MGC).</title>
        <authorList>
            <consortium name="The MGC Project Team"/>
        </authorList>
    </citation>
    <scope>NUCLEOTIDE SEQUENCE [LARGE SCALE MRNA] (ISOFORM 1)</scope>
    <source>
        <tissue>Testis</tissue>
    </source>
</reference>
<reference key="8">
    <citation type="journal article" date="1996" name="Genome Res.">
        <title>Normalization and subtraction: two approaches to facilitate gene discovery.</title>
        <authorList>
            <person name="Bonaldo M.F."/>
            <person name="Lennon G."/>
            <person name="Soares M.B."/>
        </authorList>
    </citation>
    <scope>NUCLEOTIDE SEQUENCE [LARGE SCALE MRNA] OF 1-202 (ISOFORM 2)</scope>
</reference>
<reference key="9">
    <citation type="journal article" date="2000" name="Nature">
        <title>The Eps8 protein coordinates EGF receptor signalling through Rac and trafficking through Rab5.</title>
        <authorList>
            <person name="Lanzetti L."/>
            <person name="Rybin V."/>
            <person name="Malabarba M.G."/>
            <person name="Christoforidis S."/>
            <person name="Scita G."/>
            <person name="Zerial M."/>
            <person name="Di Fiore P.P."/>
        </authorList>
    </citation>
    <scope>FUNCTION</scope>
    <scope>MUTAGENESIS OF ARG-106; ASP-147 AND ARG-150</scope>
</reference>
<reference key="10">
    <citation type="journal article" date="2004" name="Anal. Chem.">
        <title>Robust phosphoproteomic profiling of tyrosine phosphorylation sites from human T cells using immobilized metal affinity chromatography and tandem mass spectrometry.</title>
        <authorList>
            <person name="Brill L.M."/>
            <person name="Salomon A.R."/>
            <person name="Ficarro S.B."/>
            <person name="Mukherji M."/>
            <person name="Stettler-Gill M."/>
            <person name="Peters E.C."/>
        </authorList>
    </citation>
    <scope>PHOSPHORYLATION [LARGE SCALE ANALYSIS] AT TYR-582; SER-585 AND TYR-729</scope>
    <scope>IDENTIFICATION BY MASS SPECTROMETRY [LARGE SCALE ANALYSIS]</scope>
    <source>
        <tissue>Leukemic T-cell</tissue>
    </source>
</reference>
<reference key="11">
    <citation type="journal article" date="2006" name="Cell">
        <title>Global, in vivo, and site-specific phosphorylation dynamics in signaling networks.</title>
        <authorList>
            <person name="Olsen J.V."/>
            <person name="Blagoev B."/>
            <person name="Gnad F."/>
            <person name="Macek B."/>
            <person name="Kumar C."/>
            <person name="Mortensen P."/>
            <person name="Mann M."/>
        </authorList>
    </citation>
    <scope>IDENTIFICATION BY MASS SPECTROMETRY [LARGE SCALE ANALYSIS]</scope>
    <source>
        <tissue>Cervix carcinoma</tissue>
    </source>
</reference>
<reference key="12">
    <citation type="journal article" date="2007" name="J. Cell Biol.">
        <title>Specific Rab GTPase-activating proteins define the Shiga toxin and epidermal growth factor uptake pathways.</title>
        <authorList>
            <person name="Fuchs E."/>
            <person name="Haas A.K."/>
            <person name="Spooner R.A."/>
            <person name="Yoshimura S."/>
            <person name="Lord J.M."/>
            <person name="Barr F.A."/>
        </authorList>
    </citation>
    <scope>FUNCTION</scope>
    <scope>SUBCELLULAR LOCATION</scope>
    <scope>MUTAGENESIS OF ARG-150</scope>
</reference>
<reference key="13">
    <citation type="journal article" date="2007" name="J. Cell Sci.">
        <title>Analysis of GTPase-activating proteins: Rab1 and Rab43 are key Rabs required to maintain a functional Golgi complex in human cells.</title>
        <authorList>
            <person name="Haas A.K."/>
            <person name="Yoshimura S."/>
            <person name="Stephens D.J."/>
            <person name="Preisinger C."/>
            <person name="Fuchs E."/>
            <person name="Barr F.A."/>
        </authorList>
    </citation>
    <scope>FUNCTION</scope>
    <scope>SUBCELLULAR LOCATION</scope>
</reference>
<reference key="14">
    <citation type="journal article" date="2008" name="Proc. Natl. Acad. Sci. U.S.A.">
        <title>A quantitative atlas of mitotic phosphorylation.</title>
        <authorList>
            <person name="Dephoure N."/>
            <person name="Zhou C."/>
            <person name="Villen J."/>
            <person name="Beausoleil S.A."/>
            <person name="Bakalarski C.E."/>
            <person name="Elledge S.J."/>
            <person name="Gygi S.P."/>
        </authorList>
    </citation>
    <scope>PHOSPHORYLATION [LARGE SCALE ANALYSIS] AT SER-391; SER-396 AND SER-716</scope>
    <scope>IDENTIFICATION BY MASS SPECTROMETRY [LARGE SCALE ANALYSIS]</scope>
    <source>
        <tissue>Cervix carcinoma</tissue>
    </source>
</reference>
<reference key="15">
    <citation type="journal article" date="2009" name="Anal. Chem.">
        <title>Lys-N and trypsin cover complementary parts of the phosphoproteome in a refined SCX-based approach.</title>
        <authorList>
            <person name="Gauci S."/>
            <person name="Helbig A.O."/>
            <person name="Slijper M."/>
            <person name="Krijgsveld J."/>
            <person name="Heck A.J."/>
            <person name="Mohammed S."/>
        </authorList>
    </citation>
    <scope>IDENTIFICATION BY MASS SPECTROMETRY [LARGE SCALE ANALYSIS]</scope>
</reference>
<reference key="16">
    <citation type="journal article" date="2009" name="Sci. Signal.">
        <title>Quantitative phosphoproteomic analysis of T cell receptor signaling reveals system-wide modulation of protein-protein interactions.</title>
        <authorList>
            <person name="Mayya V."/>
            <person name="Lundgren D.H."/>
            <person name="Hwang S.-I."/>
            <person name="Rezaul K."/>
            <person name="Wu L."/>
            <person name="Eng J.K."/>
            <person name="Rodionov V."/>
            <person name="Han D.K."/>
        </authorList>
    </citation>
    <scope>PHOSPHORYLATION [LARGE SCALE ANALYSIS] AT SER-716</scope>
    <scope>IDENTIFICATION BY MASS SPECTROMETRY [LARGE SCALE ANALYSIS]</scope>
    <source>
        <tissue>Leukemic T-cell</tissue>
    </source>
</reference>
<reference key="17">
    <citation type="journal article" date="2010" name="Sci. Signal.">
        <title>Quantitative phosphoproteomics reveals widespread full phosphorylation site occupancy during mitosis.</title>
        <authorList>
            <person name="Olsen J.V."/>
            <person name="Vermeulen M."/>
            <person name="Santamaria A."/>
            <person name="Kumar C."/>
            <person name="Miller M.L."/>
            <person name="Jensen L.J."/>
            <person name="Gnad F."/>
            <person name="Cox J."/>
            <person name="Jensen T.S."/>
            <person name="Nigg E.A."/>
            <person name="Brunak S."/>
            <person name="Mann M."/>
        </authorList>
    </citation>
    <scope>PHOSPHORYLATION [LARGE SCALE ANALYSIS] AT SER-642; SER-655; SER-659; SER-680 AND SER-716</scope>
    <scope>IDENTIFICATION BY MASS SPECTROMETRY [LARGE SCALE ANALYSIS]</scope>
    <source>
        <tissue>Cervix carcinoma</tissue>
    </source>
</reference>
<reference key="18">
    <citation type="journal article" date="2011" name="Sci. Signal.">
        <title>System-wide temporal characterization of the proteome and phosphoproteome of human embryonic stem cell differentiation.</title>
        <authorList>
            <person name="Rigbolt K.T."/>
            <person name="Prokhorova T.A."/>
            <person name="Akimov V."/>
            <person name="Henningsen J."/>
            <person name="Johansen P.T."/>
            <person name="Kratchmarova I."/>
            <person name="Kassem M."/>
            <person name="Mann M."/>
            <person name="Olsen J.V."/>
            <person name="Blagoev B."/>
        </authorList>
    </citation>
    <scope>PHOSPHORYLATION [LARGE SCALE ANALYSIS] AT SER-716</scope>
    <scope>IDENTIFICATION BY MASS SPECTROMETRY [LARGE SCALE ANALYSIS]</scope>
</reference>
<reference key="19">
    <citation type="journal article" date="2012" name="Proc. Natl. Acad. Sci. U.S.A.">
        <title>N-terminal acetylome analyses and functional insights of the N-terminal acetyltransferase NatB.</title>
        <authorList>
            <person name="Van Damme P."/>
            <person name="Lasa M."/>
            <person name="Polevoda B."/>
            <person name="Gazquez C."/>
            <person name="Elosegui-Artola A."/>
            <person name="Kim D.S."/>
            <person name="De Juan-Pardo E."/>
            <person name="Demeyer K."/>
            <person name="Hole K."/>
            <person name="Larrea E."/>
            <person name="Timmerman E."/>
            <person name="Prieto J."/>
            <person name="Arnesen T."/>
            <person name="Sherman F."/>
            <person name="Gevaert K."/>
            <person name="Aldabe R."/>
        </authorList>
    </citation>
    <scope>ACETYLATION [LARGE SCALE ANALYSIS] AT MET-1</scope>
    <scope>IDENTIFICATION BY MASS SPECTROMETRY [LARGE SCALE ANALYSIS]</scope>
</reference>
<reference key="20">
    <citation type="journal article" date="2013" name="J. Proteome Res.">
        <title>Toward a comprehensive characterization of a human cancer cell phosphoproteome.</title>
        <authorList>
            <person name="Zhou H."/>
            <person name="Di Palma S."/>
            <person name="Preisinger C."/>
            <person name="Peng M."/>
            <person name="Polat A.N."/>
            <person name="Heck A.J."/>
            <person name="Mohammed S."/>
        </authorList>
    </citation>
    <scope>PHOSPHORYLATION [LARGE SCALE ANALYSIS] AT SER-391; SER-396; SER-400; SER-585; SER-680 AND SER-716</scope>
    <scope>IDENTIFICATION BY MASS SPECTROMETRY [LARGE SCALE ANALYSIS]</scope>
    <source>
        <tissue>Cervix carcinoma</tissue>
        <tissue>Erythroleukemia</tissue>
    </source>
</reference>
<reference key="21">
    <citation type="journal article" date="2014" name="J. Proteomics">
        <title>An enzyme assisted RP-RPLC approach for in-depth analysis of human liver phosphoproteome.</title>
        <authorList>
            <person name="Bian Y."/>
            <person name="Song C."/>
            <person name="Cheng K."/>
            <person name="Dong M."/>
            <person name="Wang F."/>
            <person name="Huang J."/>
            <person name="Sun D."/>
            <person name="Wang L."/>
            <person name="Ye M."/>
            <person name="Zou H."/>
        </authorList>
    </citation>
    <scope>PHOSPHORYLATION [LARGE SCALE ANALYSIS] AT SER-642 AND SER-716</scope>
    <scope>IDENTIFICATION BY MASS SPECTROMETRY [LARGE SCALE ANALYSIS]</scope>
    <source>
        <tissue>Liver</tissue>
    </source>
</reference>
<name>US6NL_HUMAN</name>
<keyword id="KW-0007">Acetylation</keyword>
<keyword id="KW-0025">Alternative splicing</keyword>
<keyword id="KW-0968">Cytoplasmic vesicle</keyword>
<keyword id="KW-0333">Golgi apparatus</keyword>
<keyword id="KW-0343">GTPase activation</keyword>
<keyword id="KW-0597">Phosphoprotein</keyword>
<keyword id="KW-1267">Proteomics identification</keyword>
<keyword id="KW-1185">Reference proteome</keyword>
<organism>
    <name type="scientific">Homo sapiens</name>
    <name type="common">Human</name>
    <dbReference type="NCBI Taxonomy" id="9606"/>
    <lineage>
        <taxon>Eukaryota</taxon>
        <taxon>Metazoa</taxon>
        <taxon>Chordata</taxon>
        <taxon>Craniata</taxon>
        <taxon>Vertebrata</taxon>
        <taxon>Euteleostomi</taxon>
        <taxon>Mammalia</taxon>
        <taxon>Eutheria</taxon>
        <taxon>Euarchontoglires</taxon>
        <taxon>Primates</taxon>
        <taxon>Haplorrhini</taxon>
        <taxon>Catarrhini</taxon>
        <taxon>Hominidae</taxon>
        <taxon>Homo</taxon>
    </lineage>
</organism>